<gene>
    <name type="primary">RpS13</name>
</gene>
<proteinExistence type="evidence at transcript level"/>
<comment type="similarity">
    <text evidence="2">Belongs to the universal ribosomal protein uS15 family.</text>
</comment>
<reference key="1">
    <citation type="journal article" date="2003" name="Bioinformatics">
        <title>Annotation pattern of ESTs from Spodoptera frugiperda Sf9 cells and analysis of the ribosomal protein genes reveal insect-specific features and unexpectedly low codon usage bias.</title>
        <authorList>
            <person name="Landais I."/>
            <person name="Ogliastro M."/>
            <person name="Mita K."/>
            <person name="Nohata J."/>
            <person name="Lopez-Ferber M."/>
            <person name="Duonor-Cerutti M."/>
            <person name="Shimada T."/>
            <person name="Fournier P."/>
            <person name="Devauchelle G."/>
        </authorList>
    </citation>
    <scope>NUCLEOTIDE SEQUENCE [LARGE SCALE MRNA]</scope>
</reference>
<feature type="initiator methionine" description="Removed" evidence="1">
    <location>
        <position position="1"/>
    </location>
</feature>
<feature type="chain" id="PRO_0000115679" description="Small ribosomal subunit protein uS15">
    <location>
        <begin position="2"/>
        <end position="151"/>
    </location>
</feature>
<evidence type="ECO:0000250" key="1"/>
<evidence type="ECO:0000305" key="2"/>
<protein>
    <recommendedName>
        <fullName evidence="2">Small ribosomal subunit protein uS15</fullName>
    </recommendedName>
    <alternativeName>
        <fullName>40S ribosomal protein S13</fullName>
    </alternativeName>
</protein>
<organism>
    <name type="scientific">Spodoptera frugiperda</name>
    <name type="common">Fall armyworm</name>
    <dbReference type="NCBI Taxonomy" id="7108"/>
    <lineage>
        <taxon>Eukaryota</taxon>
        <taxon>Metazoa</taxon>
        <taxon>Ecdysozoa</taxon>
        <taxon>Arthropoda</taxon>
        <taxon>Hexapoda</taxon>
        <taxon>Insecta</taxon>
        <taxon>Pterygota</taxon>
        <taxon>Neoptera</taxon>
        <taxon>Endopterygota</taxon>
        <taxon>Lepidoptera</taxon>
        <taxon>Glossata</taxon>
        <taxon>Ditrysia</taxon>
        <taxon>Noctuoidea</taxon>
        <taxon>Noctuidae</taxon>
        <taxon>Amphipyrinae</taxon>
        <taxon>Spodoptera</taxon>
    </lineage>
</organism>
<keyword id="KW-0687">Ribonucleoprotein</keyword>
<keyword id="KW-0689">Ribosomal protein</keyword>
<dbReference type="EMBL" id="AF400210">
    <property type="protein sequence ID" value="AAK92182.1"/>
    <property type="molecule type" value="mRNA"/>
</dbReference>
<dbReference type="SMR" id="Q962R6"/>
<dbReference type="EnsemblMetazoa" id="XM_035594561.2">
    <property type="protein sequence ID" value="XP_035450454.1"/>
    <property type="gene ID" value="LOC118276301"/>
</dbReference>
<dbReference type="OrthoDB" id="623277at2759"/>
<dbReference type="Proteomes" id="UP000829999">
    <property type="component" value="Unplaced"/>
</dbReference>
<dbReference type="GO" id="GO:0022627">
    <property type="term" value="C:cytosolic small ribosomal subunit"/>
    <property type="evidence" value="ECO:0007669"/>
    <property type="project" value="TreeGrafter"/>
</dbReference>
<dbReference type="GO" id="GO:0005730">
    <property type="term" value="C:nucleolus"/>
    <property type="evidence" value="ECO:0007669"/>
    <property type="project" value="TreeGrafter"/>
</dbReference>
<dbReference type="GO" id="GO:0070181">
    <property type="term" value="F:small ribosomal subunit rRNA binding"/>
    <property type="evidence" value="ECO:0007669"/>
    <property type="project" value="TreeGrafter"/>
</dbReference>
<dbReference type="GO" id="GO:0003735">
    <property type="term" value="F:structural constituent of ribosome"/>
    <property type="evidence" value="ECO:0007669"/>
    <property type="project" value="InterPro"/>
</dbReference>
<dbReference type="GO" id="GO:0006412">
    <property type="term" value="P:translation"/>
    <property type="evidence" value="ECO:0007669"/>
    <property type="project" value="InterPro"/>
</dbReference>
<dbReference type="CDD" id="cd00353">
    <property type="entry name" value="Ribosomal_S15p_S13e"/>
    <property type="match status" value="1"/>
</dbReference>
<dbReference type="FunFam" id="1.10.287.10:FF:000003">
    <property type="entry name" value="40S ribosomal protein S13"/>
    <property type="match status" value="1"/>
</dbReference>
<dbReference type="FunFam" id="4.10.860.130:FF:000001">
    <property type="entry name" value="40S ribosomal protein S13"/>
    <property type="match status" value="1"/>
</dbReference>
<dbReference type="Gene3D" id="4.10.860.130">
    <property type="match status" value="1"/>
</dbReference>
<dbReference type="Gene3D" id="1.10.287.10">
    <property type="entry name" value="S15/NS1, RNA-binding"/>
    <property type="match status" value="1"/>
</dbReference>
<dbReference type="HAMAP" id="MF_01343_A">
    <property type="entry name" value="Ribosomal_uS15_A"/>
    <property type="match status" value="1"/>
</dbReference>
<dbReference type="InterPro" id="IPR000589">
    <property type="entry name" value="Ribosomal_uS15"/>
</dbReference>
<dbReference type="InterPro" id="IPR023029">
    <property type="entry name" value="Ribosomal_uS15_arc_euk"/>
</dbReference>
<dbReference type="InterPro" id="IPR012606">
    <property type="entry name" value="Ribosomal_uS15_N"/>
</dbReference>
<dbReference type="InterPro" id="IPR009068">
    <property type="entry name" value="uS15_NS1_RNA-bd_sf"/>
</dbReference>
<dbReference type="NCBIfam" id="NF006331">
    <property type="entry name" value="PRK08561.1"/>
    <property type="match status" value="1"/>
</dbReference>
<dbReference type="PANTHER" id="PTHR11885">
    <property type="entry name" value="RIBOSOMAL PROTEIN S15P/S13E"/>
    <property type="match status" value="1"/>
</dbReference>
<dbReference type="PANTHER" id="PTHR11885:SF6">
    <property type="entry name" value="SMALL RIBOSOMAL SUBUNIT PROTEIN US15"/>
    <property type="match status" value="1"/>
</dbReference>
<dbReference type="Pfam" id="PF08069">
    <property type="entry name" value="Ribosomal_S13_N"/>
    <property type="match status" value="1"/>
</dbReference>
<dbReference type="Pfam" id="PF00312">
    <property type="entry name" value="Ribosomal_S15"/>
    <property type="match status" value="1"/>
</dbReference>
<dbReference type="SMART" id="SM01386">
    <property type="entry name" value="Ribosomal_S13_N"/>
    <property type="match status" value="1"/>
</dbReference>
<dbReference type="SMART" id="SM01387">
    <property type="entry name" value="Ribosomal_S15"/>
    <property type="match status" value="1"/>
</dbReference>
<dbReference type="SUPFAM" id="SSF47060">
    <property type="entry name" value="S15/NS1 RNA-binding domain"/>
    <property type="match status" value="1"/>
</dbReference>
<dbReference type="PROSITE" id="PS00362">
    <property type="entry name" value="RIBOSOMAL_S15"/>
    <property type="match status" value="1"/>
</dbReference>
<sequence length="151" mass="17204">MGRMHAPGKGISQSALPYRRSVPTWLKLTADDVKEQIFKLGKKGLTPSQIGVMLRDSHGVAQVRFVTGKKILRIMKAMGLAPDLPEDLYYLIKKAVAMRKHLERNRKDKDSKFRLILVESRIHRLARYYKTKSVLPPNWKYESSTASALVA</sequence>
<name>RS13_SPOFR</name>
<accession>Q962R6</accession>